<sequence>MAKKIEAYIKLQVAAGQANPSPPVGPALGQRGVNIMEFCKAFNAKTQGMEPGLPIPTVITVYSDRSFTFITKTPPAPVLLKKAAGIKSGSGRPNTDKVGTVTRAQLEEIAKTKEPDLTAADMEAAVRTIAGTARSMGLNVEGL</sequence>
<gene>
    <name evidence="1" type="primary">rplK</name>
    <name type="ordered locus">Maqu_0708</name>
</gene>
<dbReference type="EMBL" id="CP000514">
    <property type="protein sequence ID" value="ABM17805.1"/>
    <property type="molecule type" value="Genomic_DNA"/>
</dbReference>
<dbReference type="RefSeq" id="WP_011784237.1">
    <property type="nucleotide sequence ID" value="NC_008740.1"/>
</dbReference>
<dbReference type="SMR" id="A1TYI6"/>
<dbReference type="STRING" id="351348.Maqu_0708"/>
<dbReference type="KEGG" id="maq:Maqu_0708"/>
<dbReference type="eggNOG" id="COG0080">
    <property type="taxonomic scope" value="Bacteria"/>
</dbReference>
<dbReference type="HOGENOM" id="CLU_074237_2_0_6"/>
<dbReference type="OrthoDB" id="9802408at2"/>
<dbReference type="Proteomes" id="UP000000998">
    <property type="component" value="Chromosome"/>
</dbReference>
<dbReference type="GO" id="GO:0022625">
    <property type="term" value="C:cytosolic large ribosomal subunit"/>
    <property type="evidence" value="ECO:0007669"/>
    <property type="project" value="TreeGrafter"/>
</dbReference>
<dbReference type="GO" id="GO:0070180">
    <property type="term" value="F:large ribosomal subunit rRNA binding"/>
    <property type="evidence" value="ECO:0007669"/>
    <property type="project" value="UniProtKB-UniRule"/>
</dbReference>
<dbReference type="GO" id="GO:0003735">
    <property type="term" value="F:structural constituent of ribosome"/>
    <property type="evidence" value="ECO:0007669"/>
    <property type="project" value="InterPro"/>
</dbReference>
<dbReference type="GO" id="GO:0006412">
    <property type="term" value="P:translation"/>
    <property type="evidence" value="ECO:0007669"/>
    <property type="project" value="UniProtKB-UniRule"/>
</dbReference>
<dbReference type="CDD" id="cd00349">
    <property type="entry name" value="Ribosomal_L11"/>
    <property type="match status" value="1"/>
</dbReference>
<dbReference type="FunFam" id="1.10.10.250:FF:000001">
    <property type="entry name" value="50S ribosomal protein L11"/>
    <property type="match status" value="1"/>
</dbReference>
<dbReference type="FunFam" id="3.30.1550.10:FF:000001">
    <property type="entry name" value="50S ribosomal protein L11"/>
    <property type="match status" value="1"/>
</dbReference>
<dbReference type="Gene3D" id="1.10.10.250">
    <property type="entry name" value="Ribosomal protein L11, C-terminal domain"/>
    <property type="match status" value="1"/>
</dbReference>
<dbReference type="Gene3D" id="3.30.1550.10">
    <property type="entry name" value="Ribosomal protein L11/L12, N-terminal domain"/>
    <property type="match status" value="1"/>
</dbReference>
<dbReference type="HAMAP" id="MF_00736">
    <property type="entry name" value="Ribosomal_uL11"/>
    <property type="match status" value="1"/>
</dbReference>
<dbReference type="InterPro" id="IPR000911">
    <property type="entry name" value="Ribosomal_uL11"/>
</dbReference>
<dbReference type="InterPro" id="IPR006519">
    <property type="entry name" value="Ribosomal_uL11_bac-typ"/>
</dbReference>
<dbReference type="InterPro" id="IPR020783">
    <property type="entry name" value="Ribosomal_uL11_C"/>
</dbReference>
<dbReference type="InterPro" id="IPR036769">
    <property type="entry name" value="Ribosomal_uL11_C_sf"/>
</dbReference>
<dbReference type="InterPro" id="IPR020785">
    <property type="entry name" value="Ribosomal_uL11_CS"/>
</dbReference>
<dbReference type="InterPro" id="IPR020784">
    <property type="entry name" value="Ribosomal_uL11_N"/>
</dbReference>
<dbReference type="InterPro" id="IPR036796">
    <property type="entry name" value="Ribosomal_uL11_N_sf"/>
</dbReference>
<dbReference type="NCBIfam" id="TIGR01632">
    <property type="entry name" value="L11_bact"/>
    <property type="match status" value="1"/>
</dbReference>
<dbReference type="PANTHER" id="PTHR11661">
    <property type="entry name" value="60S RIBOSOMAL PROTEIN L12"/>
    <property type="match status" value="1"/>
</dbReference>
<dbReference type="PANTHER" id="PTHR11661:SF1">
    <property type="entry name" value="LARGE RIBOSOMAL SUBUNIT PROTEIN UL11M"/>
    <property type="match status" value="1"/>
</dbReference>
<dbReference type="Pfam" id="PF00298">
    <property type="entry name" value="Ribosomal_L11"/>
    <property type="match status" value="1"/>
</dbReference>
<dbReference type="Pfam" id="PF03946">
    <property type="entry name" value="Ribosomal_L11_N"/>
    <property type="match status" value="1"/>
</dbReference>
<dbReference type="SMART" id="SM00649">
    <property type="entry name" value="RL11"/>
    <property type="match status" value="1"/>
</dbReference>
<dbReference type="SUPFAM" id="SSF54747">
    <property type="entry name" value="Ribosomal L11/L12e N-terminal domain"/>
    <property type="match status" value="1"/>
</dbReference>
<dbReference type="SUPFAM" id="SSF46906">
    <property type="entry name" value="Ribosomal protein L11, C-terminal domain"/>
    <property type="match status" value="1"/>
</dbReference>
<dbReference type="PROSITE" id="PS00359">
    <property type="entry name" value="RIBOSOMAL_L11"/>
    <property type="match status" value="1"/>
</dbReference>
<reference key="1">
    <citation type="journal article" date="2011" name="Appl. Environ. Microbiol.">
        <title>Genomic potential of Marinobacter aquaeolei, a biogeochemical 'opportunitroph'.</title>
        <authorList>
            <person name="Singer E."/>
            <person name="Webb E.A."/>
            <person name="Nelson W.C."/>
            <person name="Heidelberg J.F."/>
            <person name="Ivanova N."/>
            <person name="Pati A."/>
            <person name="Edwards K.J."/>
        </authorList>
    </citation>
    <scope>NUCLEOTIDE SEQUENCE [LARGE SCALE GENOMIC DNA]</scope>
    <source>
        <strain>ATCC 700491 / DSM 11845 / VT8</strain>
    </source>
</reference>
<feature type="chain" id="PRO_1000046207" description="Large ribosomal subunit protein uL11">
    <location>
        <begin position="1"/>
        <end position="143"/>
    </location>
</feature>
<evidence type="ECO:0000255" key="1">
    <source>
        <dbReference type="HAMAP-Rule" id="MF_00736"/>
    </source>
</evidence>
<evidence type="ECO:0000305" key="2"/>
<comment type="function">
    <text evidence="1">Forms part of the ribosomal stalk which helps the ribosome interact with GTP-bound translation factors.</text>
</comment>
<comment type="subunit">
    <text evidence="1">Part of the ribosomal stalk of the 50S ribosomal subunit. Interacts with L10 and the large rRNA to form the base of the stalk. L10 forms an elongated spine to which L12 dimers bind in a sequential fashion forming a multimeric L10(L12)X complex.</text>
</comment>
<comment type="PTM">
    <text evidence="1">One or more lysine residues are methylated.</text>
</comment>
<comment type="similarity">
    <text evidence="1">Belongs to the universal ribosomal protein uL11 family.</text>
</comment>
<name>RL11_MARN8</name>
<keyword id="KW-0488">Methylation</keyword>
<keyword id="KW-0687">Ribonucleoprotein</keyword>
<keyword id="KW-0689">Ribosomal protein</keyword>
<keyword id="KW-0694">RNA-binding</keyword>
<keyword id="KW-0699">rRNA-binding</keyword>
<proteinExistence type="inferred from homology"/>
<accession>A1TYI6</accession>
<protein>
    <recommendedName>
        <fullName evidence="1">Large ribosomal subunit protein uL11</fullName>
    </recommendedName>
    <alternativeName>
        <fullName evidence="2">50S ribosomal protein L11</fullName>
    </alternativeName>
</protein>
<organism>
    <name type="scientific">Marinobacter nauticus (strain ATCC 700491 / DSM 11845 / VT8)</name>
    <name type="common">Marinobacter aquaeolei</name>
    <dbReference type="NCBI Taxonomy" id="351348"/>
    <lineage>
        <taxon>Bacteria</taxon>
        <taxon>Pseudomonadati</taxon>
        <taxon>Pseudomonadota</taxon>
        <taxon>Gammaproteobacteria</taxon>
        <taxon>Pseudomonadales</taxon>
        <taxon>Marinobacteraceae</taxon>
        <taxon>Marinobacter</taxon>
    </lineage>
</organism>